<comment type="function">
    <text evidence="1">Specifically methylates the N7 position of guanine in position 527 of 16S rRNA.</text>
</comment>
<comment type="catalytic activity">
    <reaction evidence="1">
        <text>guanosine(527) in 16S rRNA + S-adenosyl-L-methionine = N(7)-methylguanosine(527) in 16S rRNA + S-adenosyl-L-homocysteine</text>
        <dbReference type="Rhea" id="RHEA:42732"/>
        <dbReference type="Rhea" id="RHEA-COMP:10209"/>
        <dbReference type="Rhea" id="RHEA-COMP:10210"/>
        <dbReference type="ChEBI" id="CHEBI:57856"/>
        <dbReference type="ChEBI" id="CHEBI:59789"/>
        <dbReference type="ChEBI" id="CHEBI:74269"/>
        <dbReference type="ChEBI" id="CHEBI:74480"/>
        <dbReference type="EC" id="2.1.1.170"/>
    </reaction>
</comment>
<comment type="subcellular location">
    <subcellularLocation>
        <location evidence="1">Cytoplasm</location>
    </subcellularLocation>
</comment>
<comment type="similarity">
    <text evidence="1">Belongs to the methyltransferase superfamily. RNA methyltransferase RsmG family.</text>
</comment>
<protein>
    <recommendedName>
        <fullName evidence="1">Ribosomal RNA small subunit methyltransferase G</fullName>
        <ecNumber evidence="1">2.1.1.170</ecNumber>
    </recommendedName>
    <alternativeName>
        <fullName evidence="1">16S rRNA 7-methylguanosine methyltransferase</fullName>
        <shortName evidence="1">16S rRNA m7G methyltransferase</shortName>
    </alternativeName>
</protein>
<gene>
    <name evidence="1" type="primary">rsmG</name>
    <name type="ordered locus">Shewmr7_4027</name>
</gene>
<accession>Q0HPF1</accession>
<feature type="chain" id="PRO_1000010205" description="Ribosomal RNA small subunit methyltransferase G">
    <location>
        <begin position="1"/>
        <end position="206"/>
    </location>
</feature>
<feature type="binding site" evidence="1">
    <location>
        <position position="74"/>
    </location>
    <ligand>
        <name>S-adenosyl-L-methionine</name>
        <dbReference type="ChEBI" id="CHEBI:59789"/>
    </ligand>
</feature>
<feature type="binding site" evidence="1">
    <location>
        <position position="79"/>
    </location>
    <ligand>
        <name>S-adenosyl-L-methionine</name>
        <dbReference type="ChEBI" id="CHEBI:59789"/>
    </ligand>
</feature>
<feature type="binding site" evidence="1">
    <location>
        <begin position="125"/>
        <end position="126"/>
    </location>
    <ligand>
        <name>S-adenosyl-L-methionine</name>
        <dbReference type="ChEBI" id="CHEBI:59789"/>
    </ligand>
</feature>
<feature type="binding site" evidence="1">
    <location>
        <position position="140"/>
    </location>
    <ligand>
        <name>S-adenosyl-L-methionine</name>
        <dbReference type="ChEBI" id="CHEBI:59789"/>
    </ligand>
</feature>
<sequence length="206" mass="23278">MLSAQLEAYLAEINLPATAEQKKQLLDFVGMLNKWNKAYNLTSVRDPEAMLVRHIMDSLVVSPHLQGEHFIDVGTGPGLPGIPLAIMNPDKTFVLLDSLGKRIRFQKQVAFELGIHNISSIESRVEAYQPEQKFDGVLSRAFASIHDMLTWCHHLPAEHGQFYALKGQLSDEEMQQIPAGFVVTETIELKVPRLDEQRHLLKIIKE</sequence>
<organism>
    <name type="scientific">Shewanella sp. (strain MR-7)</name>
    <dbReference type="NCBI Taxonomy" id="60481"/>
    <lineage>
        <taxon>Bacteria</taxon>
        <taxon>Pseudomonadati</taxon>
        <taxon>Pseudomonadota</taxon>
        <taxon>Gammaproteobacteria</taxon>
        <taxon>Alteromonadales</taxon>
        <taxon>Shewanellaceae</taxon>
        <taxon>Shewanella</taxon>
    </lineage>
</organism>
<evidence type="ECO:0000255" key="1">
    <source>
        <dbReference type="HAMAP-Rule" id="MF_00074"/>
    </source>
</evidence>
<keyword id="KW-0963">Cytoplasm</keyword>
<keyword id="KW-0489">Methyltransferase</keyword>
<keyword id="KW-0698">rRNA processing</keyword>
<keyword id="KW-0949">S-adenosyl-L-methionine</keyword>
<keyword id="KW-0808">Transferase</keyword>
<proteinExistence type="inferred from homology"/>
<dbReference type="EC" id="2.1.1.170" evidence="1"/>
<dbReference type="EMBL" id="CP000444">
    <property type="protein sequence ID" value="ABI45004.1"/>
    <property type="molecule type" value="Genomic_DNA"/>
</dbReference>
<dbReference type="SMR" id="Q0HPF1"/>
<dbReference type="KEGG" id="shm:Shewmr7_4027"/>
<dbReference type="HOGENOM" id="CLU_065341_2_0_6"/>
<dbReference type="GO" id="GO:0005829">
    <property type="term" value="C:cytosol"/>
    <property type="evidence" value="ECO:0007669"/>
    <property type="project" value="TreeGrafter"/>
</dbReference>
<dbReference type="GO" id="GO:0070043">
    <property type="term" value="F:rRNA (guanine-N7-)-methyltransferase activity"/>
    <property type="evidence" value="ECO:0007669"/>
    <property type="project" value="UniProtKB-UniRule"/>
</dbReference>
<dbReference type="CDD" id="cd02440">
    <property type="entry name" value="AdoMet_MTases"/>
    <property type="match status" value="1"/>
</dbReference>
<dbReference type="FunFam" id="3.40.50.150:FF:000032">
    <property type="entry name" value="Ribosomal RNA small subunit methyltransferase G"/>
    <property type="match status" value="1"/>
</dbReference>
<dbReference type="Gene3D" id="3.40.50.150">
    <property type="entry name" value="Vaccinia Virus protein VP39"/>
    <property type="match status" value="1"/>
</dbReference>
<dbReference type="HAMAP" id="MF_00074">
    <property type="entry name" value="16SrRNA_methyltr_G"/>
    <property type="match status" value="1"/>
</dbReference>
<dbReference type="InterPro" id="IPR003682">
    <property type="entry name" value="rRNA_ssu_MeTfrase_G"/>
</dbReference>
<dbReference type="InterPro" id="IPR029063">
    <property type="entry name" value="SAM-dependent_MTases_sf"/>
</dbReference>
<dbReference type="NCBIfam" id="TIGR00138">
    <property type="entry name" value="rsmG_gidB"/>
    <property type="match status" value="1"/>
</dbReference>
<dbReference type="PANTHER" id="PTHR31760">
    <property type="entry name" value="S-ADENOSYL-L-METHIONINE-DEPENDENT METHYLTRANSFERASES SUPERFAMILY PROTEIN"/>
    <property type="match status" value="1"/>
</dbReference>
<dbReference type="PANTHER" id="PTHR31760:SF0">
    <property type="entry name" value="S-ADENOSYL-L-METHIONINE-DEPENDENT METHYLTRANSFERASES SUPERFAMILY PROTEIN"/>
    <property type="match status" value="1"/>
</dbReference>
<dbReference type="Pfam" id="PF02527">
    <property type="entry name" value="GidB"/>
    <property type="match status" value="1"/>
</dbReference>
<dbReference type="PIRSF" id="PIRSF003078">
    <property type="entry name" value="GidB"/>
    <property type="match status" value="1"/>
</dbReference>
<dbReference type="SUPFAM" id="SSF53335">
    <property type="entry name" value="S-adenosyl-L-methionine-dependent methyltransferases"/>
    <property type="match status" value="1"/>
</dbReference>
<name>RSMG_SHESR</name>
<reference key="1">
    <citation type="submission" date="2006-08" db="EMBL/GenBank/DDBJ databases">
        <title>Complete sequence of chromosome 1 of Shewanella sp. MR-7.</title>
        <authorList>
            <person name="Copeland A."/>
            <person name="Lucas S."/>
            <person name="Lapidus A."/>
            <person name="Barry K."/>
            <person name="Detter J.C."/>
            <person name="Glavina del Rio T."/>
            <person name="Hammon N."/>
            <person name="Israni S."/>
            <person name="Dalin E."/>
            <person name="Tice H."/>
            <person name="Pitluck S."/>
            <person name="Kiss H."/>
            <person name="Brettin T."/>
            <person name="Bruce D."/>
            <person name="Han C."/>
            <person name="Tapia R."/>
            <person name="Gilna P."/>
            <person name="Schmutz J."/>
            <person name="Larimer F."/>
            <person name="Land M."/>
            <person name="Hauser L."/>
            <person name="Kyrpides N."/>
            <person name="Mikhailova N."/>
            <person name="Nealson K."/>
            <person name="Konstantinidis K."/>
            <person name="Klappenbach J."/>
            <person name="Tiedje J."/>
            <person name="Richardson P."/>
        </authorList>
    </citation>
    <scope>NUCLEOTIDE SEQUENCE [LARGE SCALE GENOMIC DNA]</scope>
    <source>
        <strain>MR-7</strain>
    </source>
</reference>